<evidence type="ECO:0000255" key="1">
    <source>
        <dbReference type="HAMAP-Rule" id="MF_01338"/>
    </source>
</evidence>
<protein>
    <recommendedName>
        <fullName evidence="1">Ribulose bisphosphate carboxylase large chain</fullName>
        <shortName evidence="1">RuBisCO large subunit</shortName>
        <ecNumber evidence="1">4.1.1.39</ecNumber>
    </recommendedName>
</protein>
<sequence length="466" mass="51652">SVGFKAGVKDYKLTYYTPDYVTKDTDILAAFRVTPQPGVPPEEAGAAVAAESSTGTWTTVWTDGLTSLDRYKGRCYNIEPVAGEENQYICYVAYPLDLFEEGSVTNMFTSIVGNAFGFKALRALRLEDLRIPSAYVKTFQGPPHGIQVERDKLNKYGRPLLGCTIKPKLGLSAKNYGRAVYECLRGGLDFTKDDENVNSQPFMRWRDRFLFCAEAIFKSQAETGEIKGHYLNATAGTCEEMIKRAVFARELGVPIVMHDYLTGGFTANTSLAHYCRDNGLLLHIHRAMHAVIDRQKNHGMHFRVLAKALRMSGGDHIHAGTVVGKLEGERDITLGFVDLLRDDFIEKDRSRGIYFTQDWVSLPGVLPVASGGIHVWHMPALTEIFGDDSVLQFGGGTLGHPWGNAPGAVANRVALEACVQARNEGRDLAREGNEIIREASKWSPELAAACEVWKEIKFQFEAMDTL</sequence>
<proteinExistence type="inferred from homology"/>
<organism>
    <name type="scientific">Aesculus pavia</name>
    <name type="common">Red buckeye</name>
    <dbReference type="NCBI Taxonomy" id="43872"/>
    <lineage>
        <taxon>Eukaryota</taxon>
        <taxon>Viridiplantae</taxon>
        <taxon>Streptophyta</taxon>
        <taxon>Embryophyta</taxon>
        <taxon>Tracheophyta</taxon>
        <taxon>Spermatophyta</taxon>
        <taxon>Magnoliopsida</taxon>
        <taxon>eudicotyledons</taxon>
        <taxon>Gunneridae</taxon>
        <taxon>Pentapetalae</taxon>
        <taxon>rosids</taxon>
        <taxon>malvids</taxon>
        <taxon>Sapindales</taxon>
        <taxon>Sapindaceae</taxon>
        <taxon>Hippocastanoideae</taxon>
        <taxon>Hippocastaneae</taxon>
        <taxon>Aesculus</taxon>
    </lineage>
</organism>
<keyword id="KW-0113">Calvin cycle</keyword>
<keyword id="KW-0120">Carbon dioxide fixation</keyword>
<keyword id="KW-0150">Chloroplast</keyword>
<keyword id="KW-1015">Disulfide bond</keyword>
<keyword id="KW-0456">Lyase</keyword>
<keyword id="KW-0460">Magnesium</keyword>
<keyword id="KW-0479">Metal-binding</keyword>
<keyword id="KW-0488">Methylation</keyword>
<keyword id="KW-0503">Monooxygenase</keyword>
<keyword id="KW-0560">Oxidoreductase</keyword>
<keyword id="KW-0601">Photorespiration</keyword>
<keyword id="KW-0602">Photosynthesis</keyword>
<keyword id="KW-0934">Plastid</keyword>
<geneLocation type="chloroplast"/>
<dbReference type="EC" id="4.1.1.39" evidence="1"/>
<dbReference type="EMBL" id="U39277">
    <property type="protein sequence ID" value="AAB01744.2"/>
    <property type="molecule type" value="Genomic_DNA"/>
</dbReference>
<dbReference type="SMR" id="Q31827"/>
<dbReference type="GO" id="GO:0009507">
    <property type="term" value="C:chloroplast"/>
    <property type="evidence" value="ECO:0007669"/>
    <property type="project" value="UniProtKB-SubCell"/>
</dbReference>
<dbReference type="GO" id="GO:0000287">
    <property type="term" value="F:magnesium ion binding"/>
    <property type="evidence" value="ECO:0007669"/>
    <property type="project" value="InterPro"/>
</dbReference>
<dbReference type="GO" id="GO:0004497">
    <property type="term" value="F:monooxygenase activity"/>
    <property type="evidence" value="ECO:0007669"/>
    <property type="project" value="UniProtKB-KW"/>
</dbReference>
<dbReference type="GO" id="GO:0016984">
    <property type="term" value="F:ribulose-bisphosphate carboxylase activity"/>
    <property type="evidence" value="ECO:0007669"/>
    <property type="project" value="UniProtKB-EC"/>
</dbReference>
<dbReference type="GO" id="GO:0009853">
    <property type="term" value="P:photorespiration"/>
    <property type="evidence" value="ECO:0007669"/>
    <property type="project" value="UniProtKB-KW"/>
</dbReference>
<dbReference type="GO" id="GO:0019253">
    <property type="term" value="P:reductive pentose-phosphate cycle"/>
    <property type="evidence" value="ECO:0007669"/>
    <property type="project" value="UniProtKB-KW"/>
</dbReference>
<dbReference type="CDD" id="cd08212">
    <property type="entry name" value="RuBisCO_large_I"/>
    <property type="match status" value="1"/>
</dbReference>
<dbReference type="FunFam" id="3.20.20.110:FF:000001">
    <property type="entry name" value="Ribulose bisphosphate carboxylase large chain"/>
    <property type="match status" value="1"/>
</dbReference>
<dbReference type="FunFam" id="3.30.70.150:FF:000001">
    <property type="entry name" value="Ribulose bisphosphate carboxylase large chain"/>
    <property type="match status" value="1"/>
</dbReference>
<dbReference type="Gene3D" id="3.20.20.110">
    <property type="entry name" value="Ribulose bisphosphate carboxylase, large subunit, C-terminal domain"/>
    <property type="match status" value="1"/>
</dbReference>
<dbReference type="Gene3D" id="3.30.70.150">
    <property type="entry name" value="RuBisCO large subunit, N-terminal domain"/>
    <property type="match status" value="1"/>
</dbReference>
<dbReference type="HAMAP" id="MF_01338">
    <property type="entry name" value="RuBisCO_L_type1"/>
    <property type="match status" value="1"/>
</dbReference>
<dbReference type="InterPro" id="IPR033966">
    <property type="entry name" value="RuBisCO"/>
</dbReference>
<dbReference type="InterPro" id="IPR020878">
    <property type="entry name" value="RuBisCo_large_chain_AS"/>
</dbReference>
<dbReference type="InterPro" id="IPR000685">
    <property type="entry name" value="RuBisCO_lsu_C"/>
</dbReference>
<dbReference type="InterPro" id="IPR036376">
    <property type="entry name" value="RuBisCO_lsu_C_sf"/>
</dbReference>
<dbReference type="InterPro" id="IPR017443">
    <property type="entry name" value="RuBisCO_lsu_fd_N"/>
</dbReference>
<dbReference type="InterPro" id="IPR036422">
    <property type="entry name" value="RuBisCO_lsu_N_sf"/>
</dbReference>
<dbReference type="InterPro" id="IPR020888">
    <property type="entry name" value="RuBisCO_lsuI"/>
</dbReference>
<dbReference type="NCBIfam" id="NF003252">
    <property type="entry name" value="PRK04208.1"/>
    <property type="match status" value="1"/>
</dbReference>
<dbReference type="PANTHER" id="PTHR42704">
    <property type="entry name" value="RIBULOSE BISPHOSPHATE CARBOXYLASE"/>
    <property type="match status" value="1"/>
</dbReference>
<dbReference type="PANTHER" id="PTHR42704:SF15">
    <property type="entry name" value="RIBULOSE BISPHOSPHATE CARBOXYLASE LARGE CHAIN"/>
    <property type="match status" value="1"/>
</dbReference>
<dbReference type="Pfam" id="PF00016">
    <property type="entry name" value="RuBisCO_large"/>
    <property type="match status" value="1"/>
</dbReference>
<dbReference type="Pfam" id="PF02788">
    <property type="entry name" value="RuBisCO_large_N"/>
    <property type="match status" value="1"/>
</dbReference>
<dbReference type="SFLD" id="SFLDG01052">
    <property type="entry name" value="RuBisCO"/>
    <property type="match status" value="1"/>
</dbReference>
<dbReference type="SFLD" id="SFLDS00014">
    <property type="entry name" value="RuBisCO"/>
    <property type="match status" value="1"/>
</dbReference>
<dbReference type="SFLD" id="SFLDG00301">
    <property type="entry name" value="RuBisCO-like_proteins"/>
    <property type="match status" value="1"/>
</dbReference>
<dbReference type="SUPFAM" id="SSF51649">
    <property type="entry name" value="RuBisCo, C-terminal domain"/>
    <property type="match status" value="1"/>
</dbReference>
<dbReference type="SUPFAM" id="SSF54966">
    <property type="entry name" value="RuBisCO, large subunit, small (N-terminal) domain"/>
    <property type="match status" value="1"/>
</dbReference>
<dbReference type="PROSITE" id="PS00157">
    <property type="entry name" value="RUBISCO_LARGE"/>
    <property type="match status" value="1"/>
</dbReference>
<accession>Q31827</accession>
<name>RBL_AESPA</name>
<comment type="function">
    <text evidence="1">RuBisCO catalyzes two reactions: the carboxylation of D-ribulose 1,5-bisphosphate, the primary event in carbon dioxide fixation, as well as the oxidative fragmentation of the pentose substrate in the photorespiration process. Both reactions occur simultaneously and in competition at the same active site.</text>
</comment>
<comment type="catalytic activity">
    <reaction evidence="1">
        <text>2 (2R)-3-phosphoglycerate + 2 H(+) = D-ribulose 1,5-bisphosphate + CO2 + H2O</text>
        <dbReference type="Rhea" id="RHEA:23124"/>
        <dbReference type="ChEBI" id="CHEBI:15377"/>
        <dbReference type="ChEBI" id="CHEBI:15378"/>
        <dbReference type="ChEBI" id="CHEBI:16526"/>
        <dbReference type="ChEBI" id="CHEBI:57870"/>
        <dbReference type="ChEBI" id="CHEBI:58272"/>
        <dbReference type="EC" id="4.1.1.39"/>
    </reaction>
</comment>
<comment type="catalytic activity">
    <reaction evidence="1">
        <text>D-ribulose 1,5-bisphosphate + O2 = 2-phosphoglycolate + (2R)-3-phosphoglycerate + 2 H(+)</text>
        <dbReference type="Rhea" id="RHEA:36631"/>
        <dbReference type="ChEBI" id="CHEBI:15378"/>
        <dbReference type="ChEBI" id="CHEBI:15379"/>
        <dbReference type="ChEBI" id="CHEBI:57870"/>
        <dbReference type="ChEBI" id="CHEBI:58033"/>
        <dbReference type="ChEBI" id="CHEBI:58272"/>
    </reaction>
</comment>
<comment type="cofactor">
    <cofactor evidence="1">
        <name>Mg(2+)</name>
        <dbReference type="ChEBI" id="CHEBI:18420"/>
    </cofactor>
    <text evidence="1">Binds 1 Mg(2+) ion per subunit.</text>
</comment>
<comment type="subunit">
    <text evidence="1">Heterohexadecamer of 8 large chains and 8 small chains; disulfide-linked. The disulfide link is formed within the large subunit homodimers.</text>
</comment>
<comment type="subcellular location">
    <subcellularLocation>
        <location>Plastid</location>
        <location>Chloroplast</location>
    </subcellularLocation>
</comment>
<comment type="PTM">
    <text evidence="1">The disulfide bond which can form in the large chain dimeric partners within the hexadecamer appears to be associated with oxidative stress and protein turnover.</text>
</comment>
<comment type="miscellaneous">
    <text evidence="1">The basic functional RuBisCO is composed of a large chain homodimer in a 'head-to-tail' conformation. In form I RuBisCO this homodimer is arranged in a barrel-like tetramer with the small subunits forming a tetrameric 'cap' on each end of the 'barrel'.</text>
</comment>
<comment type="similarity">
    <text evidence="1">Belongs to the RuBisCO large chain family. Type I subfamily.</text>
</comment>
<feature type="chain" id="PRO_0000062345" description="Ribulose bisphosphate carboxylase large chain">
    <location>
        <begin position="1" status="less than"/>
        <end position="466"/>
    </location>
</feature>
<feature type="active site" description="Proton acceptor" evidence="1">
    <location>
        <position position="166"/>
    </location>
</feature>
<feature type="active site" description="Proton acceptor" evidence="1">
    <location>
        <position position="285"/>
    </location>
</feature>
<feature type="binding site" description="in homodimeric partner" evidence="1">
    <location>
        <position position="114"/>
    </location>
    <ligand>
        <name>substrate</name>
    </ligand>
</feature>
<feature type="binding site" evidence="1">
    <location>
        <position position="164"/>
    </location>
    <ligand>
        <name>substrate</name>
    </ligand>
</feature>
<feature type="binding site" evidence="1">
    <location>
        <position position="168"/>
    </location>
    <ligand>
        <name>substrate</name>
    </ligand>
</feature>
<feature type="binding site" description="via carbamate group" evidence="1">
    <location>
        <position position="192"/>
    </location>
    <ligand>
        <name>Mg(2+)</name>
        <dbReference type="ChEBI" id="CHEBI:18420"/>
    </ligand>
</feature>
<feature type="binding site" evidence="1">
    <location>
        <position position="194"/>
    </location>
    <ligand>
        <name>Mg(2+)</name>
        <dbReference type="ChEBI" id="CHEBI:18420"/>
    </ligand>
</feature>
<feature type="binding site" evidence="1">
    <location>
        <position position="195"/>
    </location>
    <ligand>
        <name>Mg(2+)</name>
        <dbReference type="ChEBI" id="CHEBI:18420"/>
    </ligand>
</feature>
<feature type="binding site" evidence="1">
    <location>
        <position position="286"/>
    </location>
    <ligand>
        <name>substrate</name>
    </ligand>
</feature>
<feature type="binding site" evidence="1">
    <location>
        <position position="318"/>
    </location>
    <ligand>
        <name>substrate</name>
    </ligand>
</feature>
<feature type="binding site" evidence="1">
    <location>
        <position position="370"/>
    </location>
    <ligand>
        <name>substrate</name>
    </ligand>
</feature>
<feature type="site" description="Transition state stabilizer" evidence="1">
    <location>
        <position position="325"/>
    </location>
</feature>
<feature type="modified residue" description="N6,N6,N6-trimethyllysine" evidence="1">
    <location>
        <position position="5"/>
    </location>
</feature>
<feature type="modified residue" description="N6-carboxylysine" evidence="1">
    <location>
        <position position="192"/>
    </location>
</feature>
<feature type="disulfide bond" description="Interchain; in linked form" evidence="1">
    <location>
        <position position="238"/>
    </location>
</feature>
<feature type="non-terminal residue">
    <location>
        <position position="1"/>
    </location>
</feature>
<gene>
    <name evidence="1" type="primary">rbcL</name>
</gene>
<reference key="1">
    <citation type="journal article" date="1996" name="Am. J. Bot.">
        <title>Sapindales: molecular delimitation and infraordinal groups.</title>
        <authorList>
            <person name="Gadek P.A."/>
            <person name="Fernando E.S."/>
            <person name="Quinn C.J."/>
            <person name="Hoot S.B."/>
            <person name="Terrazas T."/>
            <person name="Sheahan M.C."/>
            <person name="Chase M.W."/>
        </authorList>
    </citation>
    <scope>NUCLEOTIDE SEQUENCE [GENOMIC DNA]</scope>
</reference>